<proteinExistence type="evidence at protein level"/>
<gene>
    <name evidence="5 7" type="primary">CCDC124</name>
</gene>
<accession>Q96CT7</accession>
<sequence>MPKKFQGENTKSAAARARRAEAKAAADAKKQKELEDAYWKDDDKHVMRKEQRKEEKEKRRLDQLERKKETQRLLEEEDSKLKGGKAPRVATSSKVTRAQIEDTLRRDHQLREAPDTAEKAKSHLEVPLEENVNRRVLEEGSVEARTIEDAIAVLSVAEEAADRHPERRMRAAFTAFEEAQLPRLKQENPNMRLSQLKQLLKKEWLRSPDNPMNQRAVPFNAPK</sequence>
<evidence type="ECO:0000255" key="1"/>
<evidence type="ECO:0000256" key="2">
    <source>
        <dbReference type="SAM" id="MobiDB-lite"/>
    </source>
</evidence>
<evidence type="ECO:0000269" key="3">
    <source>
    </source>
</evidence>
<evidence type="ECO:0000269" key="4">
    <source>
    </source>
</evidence>
<evidence type="ECO:0000303" key="5">
    <source>
    </source>
</evidence>
<evidence type="ECO:0000305" key="6"/>
<evidence type="ECO:0000312" key="7">
    <source>
        <dbReference type="HGNC" id="HGNC:25171"/>
    </source>
</evidence>
<evidence type="ECO:0007744" key="8">
    <source>
        <dbReference type="PDB" id="6Z6L"/>
    </source>
</evidence>
<evidence type="ECO:0007744" key="9">
    <source>
    </source>
</evidence>
<reference key="1">
    <citation type="journal article" date="2004" name="Genome Res.">
        <title>The status, quality, and expansion of the NIH full-length cDNA project: the Mammalian Gene Collection (MGC).</title>
        <authorList>
            <consortium name="The MGC Project Team"/>
        </authorList>
    </citation>
    <scope>NUCLEOTIDE SEQUENCE [LARGE SCALE MRNA]</scope>
    <source>
        <tissue>Lung</tissue>
    </source>
</reference>
<reference key="2">
    <citation type="journal article" date="2011" name="BMC Syst. Biol.">
        <title>Initial characterization of the human central proteome.</title>
        <authorList>
            <person name="Burkard T.R."/>
            <person name="Planyavsky M."/>
            <person name="Kaupe I."/>
            <person name="Breitwieser F.P."/>
            <person name="Buerckstuemmer T."/>
            <person name="Bennett K.L."/>
            <person name="Superti-Furga G."/>
            <person name="Colinge J."/>
        </authorList>
    </citation>
    <scope>IDENTIFICATION BY MASS SPECTROMETRY [LARGE SCALE ANALYSIS]</scope>
</reference>
<reference key="3">
    <citation type="journal article" date="2012" name="Proc. Natl. Acad. Sci. U.S.A.">
        <title>N-terminal acetylome analyses and functional insights of the N-terminal acetyltransferase NatB.</title>
        <authorList>
            <person name="Van Damme P."/>
            <person name="Lasa M."/>
            <person name="Polevoda B."/>
            <person name="Gazquez C."/>
            <person name="Elosegui-Artola A."/>
            <person name="Kim D.S."/>
            <person name="De Juan-Pardo E."/>
            <person name="Demeyer K."/>
            <person name="Hole K."/>
            <person name="Larrea E."/>
            <person name="Timmerman E."/>
            <person name="Prieto J."/>
            <person name="Arnesen T."/>
            <person name="Sherman F."/>
            <person name="Gevaert K."/>
            <person name="Aldabe R."/>
        </authorList>
    </citation>
    <scope>IDENTIFICATION BY MASS SPECTROMETRY [LARGE SCALE ANALYSIS]</scope>
</reference>
<reference key="4">
    <citation type="journal article" date="2013" name="J. Proteome Res.">
        <title>Toward a comprehensive characterization of a human cancer cell phosphoproteome.</title>
        <authorList>
            <person name="Zhou H."/>
            <person name="Di Palma S."/>
            <person name="Preisinger C."/>
            <person name="Peng M."/>
            <person name="Polat A.N."/>
            <person name="Heck A.J."/>
            <person name="Mohammed S."/>
        </authorList>
    </citation>
    <scope>PHOSPHORYLATION [LARGE SCALE ANALYSIS] AT SER-141 AND SER-194</scope>
    <scope>IDENTIFICATION BY MASS SPECTROMETRY [LARGE SCALE ANALYSIS]</scope>
    <source>
        <tissue>Cervix carcinoma</tissue>
        <tissue>Erythroleukemia</tissue>
    </source>
</reference>
<reference key="5">
    <citation type="journal article" date="2013" name="PLoS ONE">
        <title>Coiled-coil domain containing protein 124 is a novel centrosome and midbody protein that interacts with the ras-guanine nucleotide exchange factor 1B and is involved in cytokinesis.</title>
        <authorList>
            <person name="Telkoparan P."/>
            <person name="Erkek S."/>
            <person name="Yaman E."/>
            <person name="Alotaibi H."/>
            <person name="Bayik D."/>
            <person name="Tazebay U.H."/>
        </authorList>
    </citation>
    <scope>FUNCTION</scope>
    <scope>SUBCELLULAR LOCATION</scope>
    <scope>INTERACTION WITH RASGEF1B</scope>
    <scope>TISSUE SPECIFICITY</scope>
    <scope>PHOSPHORYLATION AT SER-141</scope>
</reference>
<reference evidence="8" key="6">
    <citation type="journal article" date="2020" name="PLoS Biol.">
        <title>Structure and function of yeast Lso2 and human CCDC124 bound to hibernating ribosomes.</title>
        <authorList>
            <person name="Wells J.N."/>
            <person name="Buschauer R."/>
            <person name="Mackens-Kiani T."/>
            <person name="Best K."/>
            <person name="Kratzat H."/>
            <person name="Berninghausen O."/>
            <person name="Becker T."/>
            <person name="Gilbert W."/>
            <person name="Cheng J."/>
            <person name="Beckmann R."/>
        </authorList>
    </citation>
    <scope>STRUCTURE BY ELECTRON MICROSCOPY (3.00 ANGSTROMS) IN COMPLEX WITH RIBOSOME</scope>
    <scope>FUNCTION</scope>
    <scope>RIBOSOME-BINDING</scope>
</reference>
<name>CC124_HUMAN</name>
<feature type="chain" id="PRO_0000263735" description="Coiled-coil domain-containing protein 124">
    <location>
        <begin position="1"/>
        <end position="223"/>
    </location>
</feature>
<feature type="region of interest" description="Disordered" evidence="2">
    <location>
        <begin position="1"/>
        <end position="126"/>
    </location>
</feature>
<feature type="region of interest" description="Disordered" evidence="2">
    <location>
        <begin position="204"/>
        <end position="223"/>
    </location>
</feature>
<feature type="coiled-coil region" evidence="1">
    <location>
        <begin position="15"/>
        <end position="82"/>
    </location>
</feature>
<feature type="compositionally biased region" description="Basic and acidic residues" evidence="2">
    <location>
        <begin position="18"/>
        <end position="74"/>
    </location>
</feature>
<feature type="compositionally biased region" description="Basic and acidic residues" evidence="2">
    <location>
        <begin position="99"/>
        <end position="126"/>
    </location>
</feature>
<feature type="modified residue" description="Phosphoserine" evidence="3 9">
    <location>
        <position position="141"/>
    </location>
</feature>
<feature type="modified residue" description="Phosphoserine" evidence="9">
    <location>
        <position position="194"/>
    </location>
</feature>
<feature type="sequence variant" id="VAR_053809" description="In dbSNP:rs8104153.">
    <original>E</original>
    <variation>Q</variation>
    <location>
        <position position="138"/>
    </location>
</feature>
<organism>
    <name type="scientific">Homo sapiens</name>
    <name type="common">Human</name>
    <dbReference type="NCBI Taxonomy" id="9606"/>
    <lineage>
        <taxon>Eukaryota</taxon>
        <taxon>Metazoa</taxon>
        <taxon>Chordata</taxon>
        <taxon>Craniata</taxon>
        <taxon>Vertebrata</taxon>
        <taxon>Euteleostomi</taxon>
        <taxon>Mammalia</taxon>
        <taxon>Eutheria</taxon>
        <taxon>Euarchontoglires</taxon>
        <taxon>Primates</taxon>
        <taxon>Haplorrhini</taxon>
        <taxon>Catarrhini</taxon>
        <taxon>Hominidae</taxon>
        <taxon>Homo</taxon>
    </lineage>
</organism>
<keyword id="KW-0002">3D-structure</keyword>
<keyword id="KW-0131">Cell cycle</keyword>
<keyword id="KW-0132">Cell division</keyword>
<keyword id="KW-0175">Coiled coil</keyword>
<keyword id="KW-0963">Cytoplasm</keyword>
<keyword id="KW-0206">Cytoskeleton</keyword>
<keyword id="KW-0597">Phosphoprotein</keyword>
<keyword id="KW-1267">Proteomics identification</keyword>
<keyword id="KW-1185">Reference proteome</keyword>
<protein>
    <recommendedName>
        <fullName evidence="6">Coiled-coil domain-containing protein 124</fullName>
    </recommendedName>
</protein>
<dbReference type="EMBL" id="BC013949">
    <property type="protein sequence ID" value="AAH13949.1"/>
    <property type="molecule type" value="mRNA"/>
</dbReference>
<dbReference type="CCDS" id="CCDS12369.1"/>
<dbReference type="RefSeq" id="NP_001129675.1">
    <property type="nucleotide sequence ID" value="NM_001136203.2"/>
</dbReference>
<dbReference type="RefSeq" id="NP_612451.1">
    <property type="nucleotide sequence ID" value="NM_138442.4"/>
</dbReference>
<dbReference type="PDB" id="6Z6L">
    <property type="method" value="EM"/>
    <property type="resolution" value="3.00 A"/>
    <property type="chains" value="CE=1-223"/>
</dbReference>
<dbReference type="PDB" id="6ZM7">
    <property type="method" value="EM"/>
    <property type="resolution" value="2.70 A"/>
    <property type="chains" value="CE=1-223"/>
</dbReference>
<dbReference type="PDB" id="6ZME">
    <property type="method" value="EM"/>
    <property type="resolution" value="3.00 A"/>
    <property type="chains" value="CE=1-223"/>
</dbReference>
<dbReference type="PDB" id="8K2C">
    <property type="method" value="EM"/>
    <property type="resolution" value="2.40 A"/>
    <property type="chains" value="CE=1-223"/>
</dbReference>
<dbReference type="PDB" id="8XSY">
    <property type="method" value="EM"/>
    <property type="resolution" value="3.00 A"/>
    <property type="chains" value="CE=1-223"/>
</dbReference>
<dbReference type="PDBsum" id="6Z6L"/>
<dbReference type="PDBsum" id="6ZM7"/>
<dbReference type="PDBsum" id="6ZME"/>
<dbReference type="PDBsum" id="8K2C"/>
<dbReference type="PDBsum" id="8XSY"/>
<dbReference type="EMDB" id="EMD-11098"/>
<dbReference type="EMDB" id="EMD-11288"/>
<dbReference type="EMDB" id="EMD-11289"/>
<dbReference type="EMDB" id="EMD-36838"/>
<dbReference type="EMDB" id="EMD-38630"/>
<dbReference type="SMR" id="Q96CT7"/>
<dbReference type="BioGRID" id="125411">
    <property type="interactions" value="128"/>
</dbReference>
<dbReference type="FunCoup" id="Q96CT7">
    <property type="interactions" value="1647"/>
</dbReference>
<dbReference type="IntAct" id="Q96CT7">
    <property type="interactions" value="93"/>
</dbReference>
<dbReference type="MINT" id="Q96CT7"/>
<dbReference type="STRING" id="9606.ENSP00000471455"/>
<dbReference type="GlyGen" id="Q96CT7">
    <property type="glycosylation" value="1 site, 1 O-linked glycan (1 site)"/>
</dbReference>
<dbReference type="iPTMnet" id="Q96CT7"/>
<dbReference type="PhosphoSitePlus" id="Q96CT7"/>
<dbReference type="BioMuta" id="CCDC124"/>
<dbReference type="DMDM" id="74731379"/>
<dbReference type="jPOST" id="Q96CT7"/>
<dbReference type="MassIVE" id="Q96CT7"/>
<dbReference type="PaxDb" id="9606-ENSP00000471455"/>
<dbReference type="PeptideAtlas" id="Q96CT7"/>
<dbReference type="ProteomicsDB" id="76221"/>
<dbReference type="Pumba" id="Q96CT7"/>
<dbReference type="Antibodypedia" id="27882">
    <property type="antibodies" value="81 antibodies from 15 providers"/>
</dbReference>
<dbReference type="DNASU" id="115098"/>
<dbReference type="Ensembl" id="ENST00000445755.7">
    <property type="protein sequence ID" value="ENSP00000408730.1"/>
    <property type="gene ID" value="ENSG00000007080.11"/>
</dbReference>
<dbReference type="Ensembl" id="ENST00000597436.5">
    <property type="protein sequence ID" value="ENSP00000471455.1"/>
    <property type="gene ID" value="ENSG00000007080.11"/>
</dbReference>
<dbReference type="GeneID" id="115098"/>
<dbReference type="KEGG" id="hsa:115098"/>
<dbReference type="MANE-Select" id="ENST00000445755.7">
    <property type="protein sequence ID" value="ENSP00000408730.1"/>
    <property type="RefSeq nucleotide sequence ID" value="NM_001136203.2"/>
    <property type="RefSeq protein sequence ID" value="NP_001129675.1"/>
</dbReference>
<dbReference type="UCSC" id="uc002nhs.4">
    <property type="organism name" value="human"/>
</dbReference>
<dbReference type="AGR" id="HGNC:25171"/>
<dbReference type="CTD" id="115098"/>
<dbReference type="DisGeNET" id="115098"/>
<dbReference type="GeneCards" id="CCDC124"/>
<dbReference type="HGNC" id="HGNC:25171">
    <property type="gene designation" value="CCDC124"/>
</dbReference>
<dbReference type="HPA" id="ENSG00000007080">
    <property type="expression patterns" value="Low tissue specificity"/>
</dbReference>
<dbReference type="neXtProt" id="NX_Q96CT7"/>
<dbReference type="OpenTargets" id="ENSG00000007080"/>
<dbReference type="PharmGKB" id="PA147358292"/>
<dbReference type="VEuPathDB" id="HostDB:ENSG00000007080"/>
<dbReference type="eggNOG" id="KOG3223">
    <property type="taxonomic scope" value="Eukaryota"/>
</dbReference>
<dbReference type="GeneTree" id="ENSGT00390000012482"/>
<dbReference type="HOGENOM" id="CLU_069723_0_1_1"/>
<dbReference type="InParanoid" id="Q96CT7"/>
<dbReference type="OMA" id="FEERMMP"/>
<dbReference type="OrthoDB" id="76412at2759"/>
<dbReference type="PAN-GO" id="Q96CT7">
    <property type="GO annotations" value="3 GO annotations based on evolutionary models"/>
</dbReference>
<dbReference type="PhylomeDB" id="Q96CT7"/>
<dbReference type="TreeFam" id="TF105913"/>
<dbReference type="PathwayCommons" id="Q96CT7"/>
<dbReference type="SignaLink" id="Q96CT7"/>
<dbReference type="BioGRID-ORCS" id="115098">
    <property type="hits" value="21 hits in 1158 CRISPR screens"/>
</dbReference>
<dbReference type="CD-CODE" id="8C2F96ED">
    <property type="entry name" value="Centrosome"/>
</dbReference>
<dbReference type="CD-CODE" id="DEE660B4">
    <property type="entry name" value="Stress granule"/>
</dbReference>
<dbReference type="CD-CODE" id="FB4E32DD">
    <property type="entry name" value="Presynaptic clusters and postsynaptic densities"/>
</dbReference>
<dbReference type="ChiTaRS" id="CCDC124">
    <property type="organism name" value="human"/>
</dbReference>
<dbReference type="GenomeRNAi" id="115098"/>
<dbReference type="Pharos" id="Q96CT7">
    <property type="development level" value="Tbio"/>
</dbReference>
<dbReference type="PRO" id="PR:Q96CT7"/>
<dbReference type="Proteomes" id="UP000005640">
    <property type="component" value="Chromosome 19"/>
</dbReference>
<dbReference type="RNAct" id="Q96CT7">
    <property type="molecule type" value="protein"/>
</dbReference>
<dbReference type="Bgee" id="ENSG00000007080">
    <property type="expression patterns" value="Expressed in cingulate cortex and 148 other cell types or tissues"/>
</dbReference>
<dbReference type="ExpressionAtlas" id="Q96CT7">
    <property type="expression patterns" value="baseline and differential"/>
</dbReference>
<dbReference type="GO" id="GO:0005813">
    <property type="term" value="C:centrosome"/>
    <property type="evidence" value="ECO:0007669"/>
    <property type="project" value="UniProtKB-SubCell"/>
</dbReference>
<dbReference type="GO" id="GO:0005829">
    <property type="term" value="C:cytosol"/>
    <property type="evidence" value="ECO:0000314"/>
    <property type="project" value="HPA"/>
</dbReference>
<dbReference type="GO" id="GO:0030496">
    <property type="term" value="C:midbody"/>
    <property type="evidence" value="ECO:0007669"/>
    <property type="project" value="UniProtKB-SubCell"/>
</dbReference>
<dbReference type="GO" id="GO:0005634">
    <property type="term" value="C:nucleus"/>
    <property type="evidence" value="ECO:0000318"/>
    <property type="project" value="GO_Central"/>
</dbReference>
<dbReference type="GO" id="GO:0005886">
    <property type="term" value="C:plasma membrane"/>
    <property type="evidence" value="ECO:0000314"/>
    <property type="project" value="HPA"/>
</dbReference>
<dbReference type="GO" id="GO:0003723">
    <property type="term" value="F:RNA binding"/>
    <property type="evidence" value="ECO:0007005"/>
    <property type="project" value="UniProtKB"/>
</dbReference>
<dbReference type="GO" id="GO:0003713">
    <property type="term" value="F:transcription coactivator activity"/>
    <property type="evidence" value="ECO:0000318"/>
    <property type="project" value="GO_Central"/>
</dbReference>
<dbReference type="GO" id="GO:0051301">
    <property type="term" value="P:cell division"/>
    <property type="evidence" value="ECO:0007669"/>
    <property type="project" value="UniProtKB-KW"/>
</dbReference>
<dbReference type="GO" id="GO:0006366">
    <property type="term" value="P:transcription by RNA polymerase II"/>
    <property type="evidence" value="ECO:0000318"/>
    <property type="project" value="GO_Central"/>
</dbReference>
<dbReference type="InterPro" id="IPR010422">
    <property type="entry name" value="Ccdc124/Oxs1"/>
</dbReference>
<dbReference type="InterPro" id="IPR054414">
    <property type="entry name" value="Ccdc124/Oxs1_C"/>
</dbReference>
<dbReference type="PANTHER" id="PTHR21680">
    <property type="entry name" value="COILED-COIL DOMAIN-CONTAINING PROTEIN 124"/>
    <property type="match status" value="1"/>
</dbReference>
<dbReference type="PANTHER" id="PTHR21680:SF0">
    <property type="entry name" value="COILED-COIL DOMAIN-CONTAINING PROTEIN 124"/>
    <property type="match status" value="1"/>
</dbReference>
<dbReference type="Pfam" id="PF06244">
    <property type="entry name" value="Ccdc124"/>
    <property type="match status" value="1"/>
</dbReference>
<comment type="function">
    <text evidence="3 4">Ribosome-binding protein involved in ribosome hibernation: associates with translationally inactive ribosomes and stabilizes the nonrotated conformation of the 80S ribosome, thereby promoting ribosome preservation and storage (PubMed:32687489). Also required for proper progression of late cytokinetic stages (PubMed:23894443).</text>
</comment>
<comment type="subunit">
    <text evidence="3 4">Associates with translationally inactive ribosomes in the nonrotated state (PubMed:32687489). Interacts with RASGEF1B (PubMed:23894443).</text>
</comment>
<comment type="interaction">
    <interactant intactId="EBI-5461329">
        <id>Q96CT7</id>
    </interactant>
    <interactant intactId="EBI-78579">
        <id>P06748</id>
        <label>NPM1</label>
    </interactant>
    <organismsDiffer>false</organismsDiffer>
    <experiments>8</experiments>
</comment>
<comment type="subcellular location">
    <subcellularLocation>
        <location evidence="3">Cytoplasm</location>
        <location evidence="3">Cytoskeleton</location>
        <location evidence="3">Microtubule organizing center</location>
        <location evidence="3">Centrosome</location>
    </subcellularLocation>
    <subcellularLocation>
        <location evidence="3">Midbody</location>
    </subcellularLocation>
    <text>Colocalizes with gamma-tubulin at interphase, prophase, metaphase, and anaphase. Relocates from centrosome to midbody at telophase.</text>
</comment>
<comment type="tissue specificity">
    <text evidence="3">Ubiquitously expressed.</text>
</comment>
<comment type="similarity">
    <text evidence="6">Belongs to the CCDC124 family.</text>
</comment>